<organism>
    <name type="scientific">Saccharomyces cerevisiae (strain ATCC 204508 / S288c)</name>
    <name type="common">Baker's yeast</name>
    <dbReference type="NCBI Taxonomy" id="559292"/>
    <lineage>
        <taxon>Eukaryota</taxon>
        <taxon>Fungi</taxon>
        <taxon>Dikarya</taxon>
        <taxon>Ascomycota</taxon>
        <taxon>Saccharomycotina</taxon>
        <taxon>Saccharomycetes</taxon>
        <taxon>Saccharomycetales</taxon>
        <taxon>Saccharomycetaceae</taxon>
        <taxon>Saccharomyces</taxon>
    </lineage>
</organism>
<gene>
    <name type="primary">FSH2</name>
    <name type="ordered locus">YMR222C</name>
    <name type="ORF">YM9959.04C</name>
</gene>
<dbReference type="EC" id="3.1.-.-"/>
<dbReference type="EMBL" id="Z49939">
    <property type="protein sequence ID" value="CAA90193.1"/>
    <property type="molecule type" value="Genomic_DNA"/>
</dbReference>
<dbReference type="EMBL" id="BK006946">
    <property type="protein sequence ID" value="DAA10121.1"/>
    <property type="molecule type" value="Genomic_DNA"/>
</dbReference>
<dbReference type="PIR" id="S57590">
    <property type="entry name" value="S57590"/>
</dbReference>
<dbReference type="RefSeq" id="NP_013949.1">
    <property type="nucleotide sequence ID" value="NM_001182729.1"/>
</dbReference>
<dbReference type="SMR" id="Q05015"/>
<dbReference type="BioGRID" id="35400">
    <property type="interactions" value="76"/>
</dbReference>
<dbReference type="DIP" id="DIP-5637N"/>
<dbReference type="FunCoup" id="Q05015">
    <property type="interactions" value="448"/>
</dbReference>
<dbReference type="STRING" id="4932.YMR222C"/>
<dbReference type="ESTHER" id="yeast-FSH2">
    <property type="family name" value="FSH1"/>
</dbReference>
<dbReference type="PaxDb" id="4932-YMR222C"/>
<dbReference type="PeptideAtlas" id="Q05015"/>
<dbReference type="EnsemblFungi" id="YMR222C_mRNA">
    <property type="protein sequence ID" value="YMR222C"/>
    <property type="gene ID" value="YMR222C"/>
</dbReference>
<dbReference type="GeneID" id="855262"/>
<dbReference type="KEGG" id="sce:YMR222C"/>
<dbReference type="AGR" id="SGD:S000004835"/>
<dbReference type="SGD" id="S000004835">
    <property type="gene designation" value="FSH2"/>
</dbReference>
<dbReference type="VEuPathDB" id="FungiDB:YMR222C"/>
<dbReference type="eggNOG" id="KOG2551">
    <property type="taxonomic scope" value="Eukaryota"/>
</dbReference>
<dbReference type="GeneTree" id="ENSGT00390000003541"/>
<dbReference type="HOGENOM" id="CLU_051938_2_2_1"/>
<dbReference type="InParanoid" id="Q05015"/>
<dbReference type="OMA" id="CYSGFIA"/>
<dbReference type="OrthoDB" id="2094269at2759"/>
<dbReference type="BioCyc" id="YEAST:G3O-32903-MONOMER"/>
<dbReference type="BioGRID-ORCS" id="855262">
    <property type="hits" value="2 hits in 10 CRISPR screens"/>
</dbReference>
<dbReference type="PRO" id="PR:Q05015"/>
<dbReference type="Proteomes" id="UP000002311">
    <property type="component" value="Chromosome XIII"/>
</dbReference>
<dbReference type="RNAct" id="Q05015">
    <property type="molecule type" value="protein"/>
</dbReference>
<dbReference type="GO" id="GO:0005737">
    <property type="term" value="C:cytoplasm"/>
    <property type="evidence" value="ECO:0007005"/>
    <property type="project" value="SGD"/>
</dbReference>
<dbReference type="GO" id="GO:0005634">
    <property type="term" value="C:nucleus"/>
    <property type="evidence" value="ECO:0000318"/>
    <property type="project" value="GO_Central"/>
</dbReference>
<dbReference type="GO" id="GO:0052689">
    <property type="term" value="F:carboxylic ester hydrolase activity"/>
    <property type="evidence" value="ECO:0007669"/>
    <property type="project" value="UniProtKB-KW"/>
</dbReference>
<dbReference type="GO" id="GO:0016787">
    <property type="term" value="F:hydrolase activity"/>
    <property type="evidence" value="ECO:0000318"/>
    <property type="project" value="GO_Central"/>
</dbReference>
<dbReference type="FunFam" id="3.40.50.1820:FF:000362">
    <property type="entry name" value="Family of serine hydrolases"/>
    <property type="match status" value="1"/>
</dbReference>
<dbReference type="Gene3D" id="3.40.50.1820">
    <property type="entry name" value="alpha/beta hydrolase"/>
    <property type="match status" value="1"/>
</dbReference>
<dbReference type="InterPro" id="IPR029058">
    <property type="entry name" value="AB_hydrolase_fold"/>
</dbReference>
<dbReference type="InterPro" id="IPR005645">
    <property type="entry name" value="FSH-like_dom"/>
</dbReference>
<dbReference type="InterPro" id="IPR050593">
    <property type="entry name" value="LovG"/>
</dbReference>
<dbReference type="PANTHER" id="PTHR48070">
    <property type="entry name" value="ESTERASE OVCA2"/>
    <property type="match status" value="1"/>
</dbReference>
<dbReference type="PANTHER" id="PTHR48070:SF6">
    <property type="entry name" value="ESTERASE OVCA2"/>
    <property type="match status" value="1"/>
</dbReference>
<dbReference type="Pfam" id="PF03959">
    <property type="entry name" value="FSH1"/>
    <property type="match status" value="1"/>
</dbReference>
<dbReference type="SUPFAM" id="SSF53474">
    <property type="entry name" value="alpha/beta-Hydrolases"/>
    <property type="match status" value="1"/>
</dbReference>
<protein>
    <recommendedName>
        <fullName>Family of serine hydrolases 2</fullName>
        <ecNumber>3.1.-.-</ecNumber>
    </recommendedName>
</protein>
<feature type="chain" id="PRO_0000212581" description="Family of serine hydrolases 2">
    <location>
        <begin position="1"/>
        <end position="223"/>
    </location>
</feature>
<feature type="active site" description="Charge relay system" evidence="1">
    <location>
        <position position="110"/>
    </location>
</feature>
<feature type="active site" description="Charge relay system" evidence="1">
    <location>
        <position position="174"/>
    </location>
</feature>
<feature type="active site" description="Charge relay system" evidence="1">
    <location>
        <position position="203"/>
    </location>
</feature>
<reference key="1">
    <citation type="journal article" date="1997" name="Nature">
        <title>The nucleotide sequence of Saccharomyces cerevisiae chromosome XIII.</title>
        <authorList>
            <person name="Bowman S."/>
            <person name="Churcher C.M."/>
            <person name="Badcock K."/>
            <person name="Brown D."/>
            <person name="Chillingworth T."/>
            <person name="Connor R."/>
            <person name="Dedman K."/>
            <person name="Devlin K."/>
            <person name="Gentles S."/>
            <person name="Hamlin N."/>
            <person name="Hunt S."/>
            <person name="Jagels K."/>
            <person name="Lye G."/>
            <person name="Moule S."/>
            <person name="Odell C."/>
            <person name="Pearson D."/>
            <person name="Rajandream M.A."/>
            <person name="Rice P."/>
            <person name="Skelton J."/>
            <person name="Walsh S.V."/>
            <person name="Whitehead S."/>
            <person name="Barrell B.G."/>
        </authorList>
    </citation>
    <scope>NUCLEOTIDE SEQUENCE [LARGE SCALE GENOMIC DNA]</scope>
    <source>
        <strain>ATCC 204508 / S288c</strain>
    </source>
</reference>
<reference key="2">
    <citation type="journal article" date="2014" name="G3 (Bethesda)">
        <title>The reference genome sequence of Saccharomyces cerevisiae: Then and now.</title>
        <authorList>
            <person name="Engel S.R."/>
            <person name="Dietrich F.S."/>
            <person name="Fisk D.G."/>
            <person name="Binkley G."/>
            <person name="Balakrishnan R."/>
            <person name="Costanzo M.C."/>
            <person name="Dwight S.S."/>
            <person name="Hitz B.C."/>
            <person name="Karra K."/>
            <person name="Nash R.S."/>
            <person name="Weng S."/>
            <person name="Wong E.D."/>
            <person name="Lloyd P."/>
            <person name="Skrzypek M.S."/>
            <person name="Miyasato S.R."/>
            <person name="Simison M."/>
            <person name="Cherry J.M."/>
        </authorList>
    </citation>
    <scope>GENOME REANNOTATION</scope>
    <source>
        <strain>ATCC 204508 / S288c</strain>
    </source>
</reference>
<reference key="3">
    <citation type="journal article" date="2004" name="Mol. Cell. Proteomics">
        <title>Synergistic computational and experimental proteomics approaches for more accurate detection of active serine hydrolases in yeast.</title>
        <authorList>
            <person name="Baxter S.M."/>
            <person name="Rosenblum J.S."/>
            <person name="Knutson S."/>
            <person name="Nelson M.R."/>
            <person name="Montimurro J.S."/>
            <person name="Di Gennaro J.A."/>
            <person name="Speir J.A."/>
            <person name="Burbaum J.J."/>
            <person name="Fetrow J.S."/>
        </authorList>
    </citation>
    <scope>FUNCTION</scope>
</reference>
<reference key="4">
    <citation type="journal article" date="2003" name="Nature">
        <title>Global analysis of protein localization in budding yeast.</title>
        <authorList>
            <person name="Huh W.-K."/>
            <person name="Falvo J.V."/>
            <person name="Gerke L.C."/>
            <person name="Carroll A.S."/>
            <person name="Howson R.W."/>
            <person name="Weissman J.S."/>
            <person name="O'Shea E.K."/>
        </authorList>
    </citation>
    <scope>SUBCELLULAR LOCATION [LARGE SCALE ANALYSIS]</scope>
</reference>
<reference key="5">
    <citation type="journal article" date="2003" name="Nature">
        <title>Global analysis of protein expression in yeast.</title>
        <authorList>
            <person name="Ghaemmaghami S."/>
            <person name="Huh W.-K."/>
            <person name="Bower K."/>
            <person name="Howson R.W."/>
            <person name="Belle A."/>
            <person name="Dephoure N."/>
            <person name="O'Shea E.K."/>
            <person name="Weissman J.S."/>
        </authorList>
    </citation>
    <scope>LEVEL OF PROTEIN EXPRESSION [LARGE SCALE ANALYSIS]</scope>
</reference>
<proteinExistence type="evidence at protein level"/>
<accession>Q05015</accession>
<accession>D6W047</accession>
<sequence>MTKNVLMLHGLAQSGDYFASKTKGFRAEMEKLGYKLYYPTAPNEFPPADVPDFLGEVIADAPGDGENTGVLAWLENDPSTGGYFIPQTTIDYLHNYVLENGPFAGIVGFSQGAGVAGYLATDFNGLLGLTTEEQPPLEFFMAVSGFRFQPQQYQEQYDLHPISVPSLHVQGELDTITEPAKVQGLYNSCTEDSRTLLMHSGGHFVPNSRGFVRKVAQWLQQLT</sequence>
<keyword id="KW-0963">Cytoplasm</keyword>
<keyword id="KW-0378">Hydrolase</keyword>
<keyword id="KW-1185">Reference proteome</keyword>
<keyword id="KW-0719">Serine esterase</keyword>
<evidence type="ECO:0000250" key="1"/>
<evidence type="ECO:0000269" key="2">
    <source>
    </source>
</evidence>
<evidence type="ECO:0000269" key="3">
    <source>
    </source>
</evidence>
<evidence type="ECO:0000269" key="4">
    <source>
    </source>
</evidence>
<evidence type="ECO:0000305" key="5"/>
<name>FSH2_YEAST</name>
<comment type="function">
    <text evidence="4">Serine hydrolase of unknown specificity.</text>
</comment>
<comment type="subcellular location">
    <subcellularLocation>
        <location evidence="2">Cytoplasm</location>
    </subcellularLocation>
</comment>
<comment type="miscellaneous">
    <text evidence="3">Present with 1070 molecules/cell in log phase SD medium.</text>
</comment>
<comment type="similarity">
    <text evidence="5">Belongs to the AB hydrolase 3 family.</text>
</comment>